<keyword id="KW-0002">3D-structure</keyword>
<keyword id="KW-0903">Direct protein sequencing</keyword>
<keyword id="KW-0390">IgG-binding protein</keyword>
<keyword id="KW-0677">Repeat</keyword>
<keyword id="KW-0964">Secreted</keyword>
<dbReference type="PIR" id="S01115">
    <property type="entry name" value="S01115"/>
</dbReference>
<dbReference type="PDB" id="5H6I">
    <property type="method" value="X-ray"/>
    <property type="resolution" value="2.45 A"/>
    <property type="chains" value="A/B/C=1-226"/>
</dbReference>
<dbReference type="PDB" id="5Y2G">
    <property type="method" value="X-ray"/>
    <property type="resolution" value="3.00 A"/>
    <property type="chains" value="A=17-226"/>
</dbReference>
<dbReference type="PDBsum" id="5H6I"/>
<dbReference type="PDBsum" id="5Y2G"/>
<dbReference type="SMR" id="P09879"/>
<dbReference type="GO" id="GO:0005576">
    <property type="term" value="C:extracellular region"/>
    <property type="evidence" value="ECO:0007669"/>
    <property type="project" value="UniProtKB-SubCell"/>
</dbReference>
<dbReference type="GO" id="GO:0019864">
    <property type="term" value="F:IgG binding"/>
    <property type="evidence" value="ECO:0007669"/>
    <property type="project" value="UniProtKB-KW"/>
</dbReference>
<dbReference type="InterPro" id="IPR010860">
    <property type="entry name" value="CAMP_factor"/>
</dbReference>
<dbReference type="Pfam" id="PF07373">
    <property type="entry name" value="CAMP_factor"/>
    <property type="match status" value="1"/>
</dbReference>
<evidence type="ECO:0007829" key="1">
    <source>
        <dbReference type="PDB" id="5H6I"/>
    </source>
</evidence>
<evidence type="ECO:0007829" key="2">
    <source>
        <dbReference type="PDB" id="5Y2G"/>
    </source>
</evidence>
<feature type="chain" id="PRO_0000058581" description="Protein B">
    <location>
        <begin position="1"/>
        <end position="226"/>
    </location>
</feature>
<feature type="repeat">
    <location>
        <begin position="158"/>
        <end position="168"/>
    </location>
</feature>
<feature type="repeat">
    <location>
        <begin position="169"/>
        <end position="179"/>
    </location>
</feature>
<feature type="repeat">
    <location>
        <begin position="180"/>
        <end position="190"/>
    </location>
</feature>
<feature type="region of interest" description="IgG constant region-binding">
    <location>
        <begin position="37"/>
        <end position="100"/>
    </location>
</feature>
<feature type="helix" evidence="1">
    <location>
        <begin position="15"/>
        <end position="38"/>
    </location>
</feature>
<feature type="turn" evidence="1">
    <location>
        <begin position="39"/>
        <end position="41"/>
    </location>
</feature>
<feature type="helix" evidence="1">
    <location>
        <begin position="45"/>
        <end position="64"/>
    </location>
</feature>
<feature type="helix" evidence="1">
    <location>
        <begin position="66"/>
        <end position="68"/>
    </location>
</feature>
<feature type="helix" evidence="1">
    <location>
        <begin position="73"/>
        <end position="95"/>
    </location>
</feature>
<feature type="turn" evidence="2">
    <location>
        <begin position="96"/>
        <end position="98"/>
    </location>
</feature>
<feature type="helix" evidence="1">
    <location>
        <begin position="101"/>
        <end position="119"/>
    </location>
</feature>
<feature type="helix" evidence="1">
    <location>
        <begin position="125"/>
        <end position="143"/>
    </location>
</feature>
<feature type="turn" evidence="1">
    <location>
        <begin position="156"/>
        <end position="158"/>
    </location>
</feature>
<feature type="helix" evidence="1">
    <location>
        <begin position="159"/>
        <end position="176"/>
    </location>
</feature>
<feature type="turn" evidence="1">
    <location>
        <begin position="177"/>
        <end position="180"/>
    </location>
</feature>
<feature type="helix" evidence="1">
    <location>
        <begin position="183"/>
        <end position="200"/>
    </location>
</feature>
<feature type="helix" evidence="1">
    <location>
        <begin position="207"/>
        <end position="225"/>
    </location>
</feature>
<accession>P09879</accession>
<name>PROB_STRAG</name>
<comment type="function">
    <text>Protein B belongs to the group of bacterial Fc-binding protein.</text>
</comment>
<comment type="subcellular location">
    <subcellularLocation>
        <location>Secreted</location>
    </subcellularLocation>
</comment>
<organism>
    <name type="scientific">Streptococcus agalactiae</name>
    <dbReference type="NCBI Taxonomy" id="1311"/>
    <lineage>
        <taxon>Bacteria</taxon>
        <taxon>Bacillati</taxon>
        <taxon>Bacillota</taxon>
        <taxon>Bacilli</taxon>
        <taxon>Lactobacillales</taxon>
        <taxon>Streptococcaceae</taxon>
        <taxon>Streptococcus</taxon>
    </lineage>
</organism>
<proteinExistence type="evidence at protein level"/>
<protein>
    <recommendedName>
        <fullName>Protein B</fullName>
    </recommendedName>
    <alternativeName>
        <fullName>cAMP factor</fullName>
    </alternativeName>
</protein>
<reference key="1">
    <citation type="journal article" date="1988" name="FEBS Lett.">
        <title>Complete amino acid sequence of protein B.</title>
        <authorList>
            <person name="Ruhlmann J."/>
            <person name="Wittmann-Liebold B."/>
            <person name="Jurgens D."/>
            <person name="Fehrenbach F.J."/>
        </authorList>
    </citation>
    <scope>PROTEIN SEQUENCE</scope>
</reference>
<sequence>DQVTTPQVVNHVNSNNQAQQMAQKLDQDSIQLRNIKDNVQGTDYEKPVNEAITSVEKLKTSLRANSETVYDLNSIGSRVEALTDVIEAITFSTQHLANKVSQANIDMGFGITKLVIRILDPFASVDSIKAQVNDVKALEQKVLTYPDLKPTDRATIYTKSKLDKEIWNTRFTRDKKVLNVKEFKVYNTLNKAITHAVGVQLNPNVTVQQVDQEIVTLQAALQTALK</sequence>